<comment type="similarity">
    <text evidence="1">Belongs to the iron-sulfur cluster assembly SufBD family.</text>
</comment>
<feature type="chain" id="PRO_0000147377" description="Iron-sulfur cluster assembly SufBD family protein slr0076">
    <location>
        <begin position="1"/>
        <end position="453"/>
    </location>
</feature>
<organism>
    <name type="scientific">Synechocystis sp. (strain ATCC 27184 / PCC 6803 / Kazusa)</name>
    <dbReference type="NCBI Taxonomy" id="1111708"/>
    <lineage>
        <taxon>Bacteria</taxon>
        <taxon>Bacillati</taxon>
        <taxon>Cyanobacteriota</taxon>
        <taxon>Cyanophyceae</taxon>
        <taxon>Synechococcales</taxon>
        <taxon>Merismopediaceae</taxon>
        <taxon>Synechocystis</taxon>
    </lineage>
</organism>
<sequence>MTAAILADALTQKVHQTEIDKELQALKEQAMVSGTEDSILVNKRQGAADLLGSLRLPHKRDEEWQFTDLSELKAIDFVAAGKVSLDVAAAENFYLPEAHQSRLVFINGFFTPELSNTNDLPSAITCQSWTNLAAHQREQLANYLGQKTDGNEVFSNLNTAGMTDSAVVWIPANTELKSPIHLLFLTVVDPTPIMVQPRLLVVVENNAQVTIAESYGAISTNCTDRPQQQPYFNNIVSEIYLGENAQVTHIRNQRDSGDSFHIATTAIAQGKQSRYRLIDVNLGAKLSRHNLQMTQQEEATKTEFLALTILAGRQVSDTHSTIALNHPHGATNQLHKCIVDEYAQAVFSGKVLVPQAAQLTNAQQLNRNLVLSSKARINTKPELQITADNVKCSHGATISQLEADEVFYLRSRGLNDYDARHLLIDAFAGEILDQIPLASLQGRLRQCVSCRTI</sequence>
<protein>
    <recommendedName>
        <fullName>Iron-sulfur cluster assembly SufBD family protein slr0076</fullName>
    </recommendedName>
</protein>
<name>Y076_SYNY3</name>
<keyword id="KW-1185">Reference proteome</keyword>
<reference key="1">
    <citation type="journal article" date="1995" name="DNA Res.">
        <title>Sequence analysis of the genome of the unicellular cyanobacterium Synechocystis sp. strain PCC6803. I. Sequence features in the 1 Mb region from map positions 64% to 92% of the genome.</title>
        <authorList>
            <person name="Kaneko T."/>
            <person name="Tanaka A."/>
            <person name="Sato S."/>
            <person name="Kotani H."/>
            <person name="Sazuka T."/>
            <person name="Miyajima N."/>
            <person name="Sugiura M."/>
            <person name="Tabata S."/>
        </authorList>
    </citation>
    <scope>NUCLEOTIDE SEQUENCE [LARGE SCALE GENOMIC DNA]</scope>
    <source>
        <strain>ATCC 27184 / PCC 6803 / N-1</strain>
    </source>
</reference>
<reference key="2">
    <citation type="journal article" date="1996" name="DNA Res.">
        <title>Sequence analysis of the genome of the unicellular cyanobacterium Synechocystis sp. strain PCC6803. II. Sequence determination of the entire genome and assignment of potential protein-coding regions.</title>
        <authorList>
            <person name="Kaneko T."/>
            <person name="Sato S."/>
            <person name="Kotani H."/>
            <person name="Tanaka A."/>
            <person name="Asamizu E."/>
            <person name="Nakamura Y."/>
            <person name="Miyajima N."/>
            <person name="Hirosawa M."/>
            <person name="Sugiura M."/>
            <person name="Sasamoto S."/>
            <person name="Kimura T."/>
            <person name="Hosouchi T."/>
            <person name="Matsuno A."/>
            <person name="Muraki A."/>
            <person name="Nakazaki N."/>
            <person name="Naruo K."/>
            <person name="Okumura S."/>
            <person name="Shimpo S."/>
            <person name="Takeuchi C."/>
            <person name="Wada T."/>
            <person name="Watanabe A."/>
            <person name="Yamada M."/>
            <person name="Yasuda M."/>
            <person name="Tabata S."/>
        </authorList>
    </citation>
    <scope>NUCLEOTIDE SEQUENCE [LARGE SCALE GENOMIC DNA]</scope>
    <source>
        <strain>ATCC 27184 / PCC 6803 / Kazusa</strain>
    </source>
</reference>
<gene>
    <name type="ordered locus">slr0076</name>
</gene>
<evidence type="ECO:0000305" key="1"/>
<accession>Q55792</accession>
<proteinExistence type="inferred from homology"/>
<dbReference type="EMBL" id="BA000022">
    <property type="protein sequence ID" value="BAA10544.1"/>
    <property type="molecule type" value="Genomic_DNA"/>
</dbReference>
<dbReference type="PIR" id="S76600">
    <property type="entry name" value="S76600"/>
</dbReference>
<dbReference type="SMR" id="Q55792"/>
<dbReference type="IntAct" id="Q55792">
    <property type="interactions" value="3"/>
</dbReference>
<dbReference type="STRING" id="1148.gene:10500048"/>
<dbReference type="PaxDb" id="1148-1001707"/>
<dbReference type="EnsemblBacteria" id="BAA10544">
    <property type="protein sequence ID" value="BAA10544"/>
    <property type="gene ID" value="BAA10544"/>
</dbReference>
<dbReference type="KEGG" id="syn:slr0076"/>
<dbReference type="eggNOG" id="COG0719">
    <property type="taxonomic scope" value="Bacteria"/>
</dbReference>
<dbReference type="InParanoid" id="Q55792"/>
<dbReference type="PhylomeDB" id="Q55792"/>
<dbReference type="Proteomes" id="UP000001425">
    <property type="component" value="Chromosome"/>
</dbReference>
<dbReference type="GO" id="GO:0016226">
    <property type="term" value="P:iron-sulfur cluster assembly"/>
    <property type="evidence" value="ECO:0007669"/>
    <property type="project" value="InterPro"/>
</dbReference>
<dbReference type="InterPro" id="IPR055346">
    <property type="entry name" value="Fe-S_cluster_assembly_SufBD"/>
</dbReference>
<dbReference type="InterPro" id="IPR000825">
    <property type="entry name" value="SUF_FeS_clus_asmbl_SufBD_core"/>
</dbReference>
<dbReference type="InterPro" id="IPR037284">
    <property type="entry name" value="SUF_FeS_clus_asmbl_SufBD_sf"/>
</dbReference>
<dbReference type="InterPro" id="IPR011542">
    <property type="entry name" value="SUF_FeS_clus_asmbl_SufD"/>
</dbReference>
<dbReference type="InterPro" id="IPR045595">
    <property type="entry name" value="SufBD_N"/>
</dbReference>
<dbReference type="NCBIfam" id="TIGR01981">
    <property type="entry name" value="sufD"/>
    <property type="match status" value="1"/>
</dbReference>
<dbReference type="PANTHER" id="PTHR43575">
    <property type="entry name" value="PROTEIN ABCI7, CHLOROPLASTIC"/>
    <property type="match status" value="1"/>
</dbReference>
<dbReference type="PANTHER" id="PTHR43575:SF1">
    <property type="entry name" value="PROTEIN ABCI7, CHLOROPLASTIC"/>
    <property type="match status" value="1"/>
</dbReference>
<dbReference type="Pfam" id="PF01458">
    <property type="entry name" value="SUFBD_core"/>
    <property type="match status" value="1"/>
</dbReference>
<dbReference type="Pfam" id="PF19295">
    <property type="entry name" value="SufBD_N"/>
    <property type="match status" value="1"/>
</dbReference>
<dbReference type="SUPFAM" id="SSF101960">
    <property type="entry name" value="Stabilizer of iron transporter SufD"/>
    <property type="match status" value="1"/>
</dbReference>